<organism>
    <name type="scientific">Drosophila melanogaster</name>
    <name type="common">Fruit fly</name>
    <dbReference type="NCBI Taxonomy" id="7227"/>
    <lineage>
        <taxon>Eukaryota</taxon>
        <taxon>Metazoa</taxon>
        <taxon>Ecdysozoa</taxon>
        <taxon>Arthropoda</taxon>
        <taxon>Hexapoda</taxon>
        <taxon>Insecta</taxon>
        <taxon>Pterygota</taxon>
        <taxon>Neoptera</taxon>
        <taxon>Endopterygota</taxon>
        <taxon>Diptera</taxon>
        <taxon>Brachycera</taxon>
        <taxon>Muscomorpha</taxon>
        <taxon>Ephydroidea</taxon>
        <taxon>Drosophilidae</taxon>
        <taxon>Drosophila</taxon>
        <taxon>Sophophora</taxon>
    </lineage>
</organism>
<dbReference type="EMBL" id="AB002556">
    <property type="protein sequence ID" value="BAA22868.1"/>
    <property type="molecule type" value="mRNA"/>
</dbReference>
<dbReference type="EMBL" id="AF016053">
    <property type="protein sequence ID" value="AAB69695.1"/>
    <property type="status" value="ALT_FRAME"/>
    <property type="molecule type" value="mRNA"/>
</dbReference>
<dbReference type="EMBL" id="AF020426">
    <property type="protein sequence ID" value="AAB88882.1"/>
    <property type="molecule type" value="mRNA"/>
</dbReference>
<dbReference type="EMBL" id="AF154417">
    <property type="protein sequence ID" value="AAD38396.1"/>
    <property type="molecule type" value="mRNA"/>
</dbReference>
<dbReference type="EMBL" id="AE014297">
    <property type="protein sequence ID" value="AAF54329.1"/>
    <property type="molecule type" value="Genomic_DNA"/>
</dbReference>
<dbReference type="EMBL" id="AY069581">
    <property type="protein sequence ID" value="AAL39726.1"/>
    <property type="molecule type" value="mRNA"/>
</dbReference>
<dbReference type="EMBL" id="M14550">
    <property type="protein sequence ID" value="AAA28838.1"/>
    <property type="status" value="ALT_FRAME"/>
    <property type="molecule type" value="Genomic_DNA"/>
</dbReference>
<dbReference type="RefSeq" id="NP_001262397.1">
    <property type="nucleotide sequence ID" value="NM_001275468.1"/>
</dbReference>
<dbReference type="RefSeq" id="NP_731308.1">
    <property type="nucleotide sequence ID" value="NM_169254.2"/>
</dbReference>
<dbReference type="SMR" id="O15945"/>
<dbReference type="BioGRID" id="66252">
    <property type="interactions" value="21"/>
</dbReference>
<dbReference type="ComplexPortal" id="CPX-2691">
    <property type="entry name" value="Hypoxia-inducible transcription factor complex"/>
</dbReference>
<dbReference type="FunCoup" id="O15945">
    <property type="interactions" value="1231"/>
</dbReference>
<dbReference type="IntAct" id="O15945">
    <property type="interactions" value="12"/>
</dbReference>
<dbReference type="STRING" id="7227.FBpp0081483"/>
<dbReference type="GlyGen" id="O15945">
    <property type="glycosylation" value="1 site"/>
</dbReference>
<dbReference type="PaxDb" id="7227-FBpp0081483"/>
<dbReference type="DNASU" id="41084"/>
<dbReference type="EnsemblMetazoa" id="FBtr0082005">
    <property type="protein sequence ID" value="FBpp0081483"/>
    <property type="gene ID" value="FBgn0264075"/>
</dbReference>
<dbReference type="EnsemblMetazoa" id="FBtr0336755">
    <property type="protein sequence ID" value="FBpp0307731"/>
    <property type="gene ID" value="FBgn0264075"/>
</dbReference>
<dbReference type="GeneID" id="41084"/>
<dbReference type="KEGG" id="dme:Dmel_CG11987"/>
<dbReference type="AGR" id="FB:FBgn0264075"/>
<dbReference type="CTD" id="41084"/>
<dbReference type="FlyBase" id="FBgn0264075">
    <property type="gene designation" value="tgo"/>
</dbReference>
<dbReference type="VEuPathDB" id="VectorBase:FBgn0264075"/>
<dbReference type="eggNOG" id="KOG3561">
    <property type="taxonomic scope" value="Eukaryota"/>
</dbReference>
<dbReference type="GeneTree" id="ENSGT00940000169286"/>
<dbReference type="HOGENOM" id="CLU_011864_1_0_1"/>
<dbReference type="InParanoid" id="O15945"/>
<dbReference type="OMA" id="NINMFNT"/>
<dbReference type="OrthoDB" id="71302at2759"/>
<dbReference type="PhylomeDB" id="O15945"/>
<dbReference type="Reactome" id="R-DME-1234158">
    <property type="pathway name" value="Regulation of gene expression by Hypoxia-inducible Factor"/>
</dbReference>
<dbReference type="Reactome" id="R-DME-211945">
    <property type="pathway name" value="Phase I - Functionalization of compounds"/>
</dbReference>
<dbReference type="Reactome" id="R-DME-8937144">
    <property type="pathway name" value="Aryl hydrocarbon receptor signalling"/>
</dbReference>
<dbReference type="Reactome" id="R-DME-9768919">
    <property type="pathway name" value="NPAS4 regulates expression of target genes"/>
</dbReference>
<dbReference type="SignaLink" id="O15945"/>
<dbReference type="BioGRID-ORCS" id="41084">
    <property type="hits" value="0 hits in 3 CRISPR screens"/>
</dbReference>
<dbReference type="ChiTaRS" id="tgo">
    <property type="organism name" value="fly"/>
</dbReference>
<dbReference type="GenomeRNAi" id="41084"/>
<dbReference type="PRO" id="PR:O15945"/>
<dbReference type="Proteomes" id="UP000000803">
    <property type="component" value="Chromosome 3R"/>
</dbReference>
<dbReference type="Bgee" id="FBgn0264075">
    <property type="expression patterns" value="Expressed in T neuron T5b (Drosophila) in embryonic/larval optic lobe (Drosophila) and 126 other cell types or tissues"/>
</dbReference>
<dbReference type="ExpressionAtlas" id="O15945">
    <property type="expression patterns" value="baseline and differential"/>
</dbReference>
<dbReference type="GO" id="GO:0034751">
    <property type="term" value="C:aryl hydrocarbon receptor complex"/>
    <property type="evidence" value="ECO:0000318"/>
    <property type="project" value="GO_Central"/>
</dbReference>
<dbReference type="GO" id="GO:0005737">
    <property type="term" value="C:cytoplasm"/>
    <property type="evidence" value="ECO:0007669"/>
    <property type="project" value="InterPro"/>
</dbReference>
<dbReference type="GO" id="GO:0005634">
    <property type="term" value="C:nucleus"/>
    <property type="evidence" value="ECO:0000314"/>
    <property type="project" value="FlyBase"/>
</dbReference>
<dbReference type="GO" id="GO:0032991">
    <property type="term" value="C:protein-containing complex"/>
    <property type="evidence" value="ECO:0000353"/>
    <property type="project" value="FlyBase"/>
</dbReference>
<dbReference type="GO" id="GO:0090575">
    <property type="term" value="C:RNA polymerase II transcription regulator complex"/>
    <property type="evidence" value="ECO:0000315"/>
    <property type="project" value="FlyBase"/>
</dbReference>
<dbReference type="GO" id="GO:0001228">
    <property type="term" value="F:DNA-binding transcription activator activity, RNA polymerase II-specific"/>
    <property type="evidence" value="ECO:0000314"/>
    <property type="project" value="FlyBase"/>
</dbReference>
<dbReference type="GO" id="GO:0003700">
    <property type="term" value="F:DNA-binding transcription factor activity"/>
    <property type="evidence" value="ECO:0000314"/>
    <property type="project" value="FlyBase"/>
</dbReference>
<dbReference type="GO" id="GO:0000981">
    <property type="term" value="F:DNA-binding transcription factor activity, RNA polymerase II-specific"/>
    <property type="evidence" value="ECO:0000314"/>
    <property type="project" value="FlyBase"/>
</dbReference>
<dbReference type="GO" id="GO:0017022">
    <property type="term" value="F:myosin binding"/>
    <property type="evidence" value="ECO:0000353"/>
    <property type="project" value="FlyBase"/>
</dbReference>
<dbReference type="GO" id="GO:0046982">
    <property type="term" value="F:protein heterodimerization activity"/>
    <property type="evidence" value="ECO:0000353"/>
    <property type="project" value="FlyBase"/>
</dbReference>
<dbReference type="GO" id="GO:0000978">
    <property type="term" value="F:RNA polymerase II cis-regulatory region sequence-specific DNA binding"/>
    <property type="evidence" value="ECO:0000318"/>
    <property type="project" value="GO_Central"/>
</dbReference>
<dbReference type="GO" id="GO:0043565">
    <property type="term" value="F:sequence-specific DNA binding"/>
    <property type="evidence" value="ECO:0000314"/>
    <property type="project" value="FlyBase"/>
</dbReference>
<dbReference type="GO" id="GO:0048736">
    <property type="term" value="P:appendage development"/>
    <property type="evidence" value="ECO:0000315"/>
    <property type="project" value="FlyBase"/>
</dbReference>
<dbReference type="GO" id="GO:0007420">
    <property type="term" value="P:brain development"/>
    <property type="evidence" value="ECO:0000315"/>
    <property type="project" value="FlyBase"/>
</dbReference>
<dbReference type="GO" id="GO:0071456">
    <property type="term" value="P:cellular response to hypoxia"/>
    <property type="evidence" value="ECO:0000314"/>
    <property type="project" value="FlyBase"/>
</dbReference>
<dbReference type="GO" id="GO:0032869">
    <property type="term" value="P:cellular response to insulin stimulus"/>
    <property type="evidence" value="ECO:0000314"/>
    <property type="project" value="FlyBase"/>
</dbReference>
<dbReference type="GO" id="GO:0007417">
    <property type="term" value="P:central nervous system development"/>
    <property type="evidence" value="ECO:0000315"/>
    <property type="project" value="FlyBase"/>
</dbReference>
<dbReference type="GO" id="GO:0008347">
    <property type="term" value="P:glial cell migration"/>
    <property type="evidence" value="ECO:0000315"/>
    <property type="project" value="FlyBase"/>
</dbReference>
<dbReference type="GO" id="GO:0016348">
    <property type="term" value="P:imaginal disc-derived leg joint morphogenesis"/>
    <property type="evidence" value="ECO:0000315"/>
    <property type="project" value="FlyBase"/>
</dbReference>
<dbReference type="GO" id="GO:0008286">
    <property type="term" value="P:insulin receptor signaling pathway"/>
    <property type="evidence" value="ECO:0000315"/>
    <property type="project" value="FlyBase"/>
</dbReference>
<dbReference type="GO" id="GO:0000122">
    <property type="term" value="P:negative regulation of transcription by RNA polymerase II"/>
    <property type="evidence" value="ECO:0000315"/>
    <property type="project" value="FlyBase"/>
</dbReference>
<dbReference type="GO" id="GO:0048477">
    <property type="term" value="P:oogenesis"/>
    <property type="evidence" value="ECO:0000315"/>
    <property type="project" value="FlyBase"/>
</dbReference>
<dbReference type="GO" id="GO:0045944">
    <property type="term" value="P:positive regulation of transcription by RNA polymerase II"/>
    <property type="evidence" value="ECO:0000314"/>
    <property type="project" value="FlyBase"/>
</dbReference>
<dbReference type="GO" id="GO:0006355">
    <property type="term" value="P:regulation of DNA-templated transcription"/>
    <property type="evidence" value="ECO:0000314"/>
    <property type="project" value="FlyBase"/>
</dbReference>
<dbReference type="GO" id="GO:0045676">
    <property type="term" value="P:regulation of R7 cell differentiation"/>
    <property type="evidence" value="ECO:0000315"/>
    <property type="project" value="FlyBase"/>
</dbReference>
<dbReference type="GO" id="GO:0006357">
    <property type="term" value="P:regulation of transcription by RNA polymerase II"/>
    <property type="evidence" value="ECO:0000314"/>
    <property type="project" value="FlyBase"/>
</dbReference>
<dbReference type="CDD" id="cd18947">
    <property type="entry name" value="bHLH-PAS_ARNT"/>
    <property type="match status" value="1"/>
</dbReference>
<dbReference type="CDD" id="cd00130">
    <property type="entry name" value="PAS"/>
    <property type="match status" value="2"/>
</dbReference>
<dbReference type="FunFam" id="3.30.450.20:FF:000003">
    <property type="entry name" value="Aryl hydrocarbon receptor nuclear translocator 2"/>
    <property type="match status" value="1"/>
</dbReference>
<dbReference type="FunFam" id="4.10.280.10:FF:000011">
    <property type="entry name" value="Aryl hydrocarbon receptor nuclear translocator 2"/>
    <property type="match status" value="1"/>
</dbReference>
<dbReference type="Gene3D" id="4.10.280.10">
    <property type="entry name" value="Helix-loop-helix DNA-binding domain"/>
    <property type="match status" value="1"/>
</dbReference>
<dbReference type="Gene3D" id="3.30.450.20">
    <property type="entry name" value="PAS domain"/>
    <property type="match status" value="2"/>
</dbReference>
<dbReference type="InterPro" id="IPR011598">
    <property type="entry name" value="bHLH_dom"/>
</dbReference>
<dbReference type="InterPro" id="IPR050933">
    <property type="entry name" value="Circadian_TF"/>
</dbReference>
<dbReference type="InterPro" id="IPR036638">
    <property type="entry name" value="HLH_DNA-bd_sf"/>
</dbReference>
<dbReference type="InterPro" id="IPR001067">
    <property type="entry name" value="Nuc_translocat"/>
</dbReference>
<dbReference type="InterPro" id="IPR000014">
    <property type="entry name" value="PAS"/>
</dbReference>
<dbReference type="InterPro" id="IPR035965">
    <property type="entry name" value="PAS-like_dom_sf"/>
</dbReference>
<dbReference type="InterPro" id="IPR013767">
    <property type="entry name" value="PAS_fold"/>
</dbReference>
<dbReference type="NCBIfam" id="TIGR00229">
    <property type="entry name" value="sensory_box"/>
    <property type="match status" value="1"/>
</dbReference>
<dbReference type="PANTHER" id="PTHR23042">
    <property type="entry name" value="CIRCADIAN PROTEIN CLOCK/ARNT/BMAL/PAS"/>
    <property type="match status" value="1"/>
</dbReference>
<dbReference type="Pfam" id="PF00010">
    <property type="entry name" value="HLH"/>
    <property type="match status" value="1"/>
</dbReference>
<dbReference type="Pfam" id="PF00989">
    <property type="entry name" value="PAS"/>
    <property type="match status" value="1"/>
</dbReference>
<dbReference type="Pfam" id="PF14598">
    <property type="entry name" value="PAS_11"/>
    <property type="match status" value="1"/>
</dbReference>
<dbReference type="PRINTS" id="PR00785">
    <property type="entry name" value="NCTRNSLOCATR"/>
</dbReference>
<dbReference type="SMART" id="SM00353">
    <property type="entry name" value="HLH"/>
    <property type="match status" value="1"/>
</dbReference>
<dbReference type="SMART" id="SM00091">
    <property type="entry name" value="PAS"/>
    <property type="match status" value="2"/>
</dbReference>
<dbReference type="SUPFAM" id="SSF47459">
    <property type="entry name" value="HLH, helix-loop-helix DNA-binding domain"/>
    <property type="match status" value="1"/>
</dbReference>
<dbReference type="SUPFAM" id="SSF55785">
    <property type="entry name" value="PYP-like sensor domain (PAS domain)"/>
    <property type="match status" value="2"/>
</dbReference>
<dbReference type="PROSITE" id="PS50888">
    <property type="entry name" value="BHLH"/>
    <property type="match status" value="1"/>
</dbReference>
<dbReference type="PROSITE" id="PS50112">
    <property type="entry name" value="PAS"/>
    <property type="match status" value="2"/>
</dbReference>
<gene>
    <name type="primary">tgo</name>
    <name type="synonym">ARNT</name>
    <name type="synonym">HIF-1-beta</name>
    <name type="ORF">CG11987</name>
</gene>
<evidence type="ECO:0000255" key="1">
    <source>
        <dbReference type="PROSITE-ProRule" id="PRU00140"/>
    </source>
</evidence>
<evidence type="ECO:0000255" key="2">
    <source>
        <dbReference type="PROSITE-ProRule" id="PRU00981"/>
    </source>
</evidence>
<evidence type="ECO:0000256" key="3">
    <source>
        <dbReference type="SAM" id="MobiDB-lite"/>
    </source>
</evidence>
<evidence type="ECO:0000269" key="4">
    <source>
    </source>
</evidence>
<evidence type="ECO:0000269" key="5">
    <source>
    </source>
</evidence>
<evidence type="ECO:0000269" key="6">
    <source>
    </source>
</evidence>
<evidence type="ECO:0000269" key="7">
    <source>
    </source>
</evidence>
<evidence type="ECO:0000305" key="8"/>
<comment type="function">
    <text evidence="4 5 6 7">Heterodimers of tgo/trh are involved in the control of breathless expression. Plays a role in the cellular or tissue response to oxygen deprivation.</text>
</comment>
<comment type="subunit">
    <text evidence="5 6 7">Efficient DNA binding requires dimerization with another bHLH protein. Heterodimer with ahr, trh or sim.</text>
</comment>
<comment type="interaction">
    <interactant intactId="EBI-172695">
        <id>O15945</id>
    </interactant>
    <interactant intactId="EBI-88929">
        <id>P05709</id>
        <label>sim</label>
    </interactant>
    <organismsDiffer>false</organismsDiffer>
    <experiments>4</experiments>
</comment>
<comment type="subcellular location">
    <subcellularLocation>
        <location evidence="2">Nucleus</location>
    </subcellularLocation>
</comment>
<comment type="tissue specificity">
    <text evidence="5 7">At stage 11, expression is detected in tracheal pits. At later stages, strong expression is also detected in the CNS.</text>
</comment>
<comment type="developmental stage">
    <text evidence="4 7">Expressed both maternally and zygotically in pupae at a low level.</text>
</comment>
<comment type="sequence caution" evidence="8">
    <conflict type="frameshift">
        <sequence resource="EMBL-CDS" id="AAA28838"/>
    </conflict>
</comment>
<comment type="sequence caution" evidence="8">
    <conflict type="frameshift">
        <sequence resource="EMBL-CDS" id="AAB69695"/>
    </conflict>
</comment>
<protein>
    <recommendedName>
        <fullName>Aryl hydrocarbon receptor nuclear translocator homolog</fullName>
        <shortName>dARNT</shortName>
    </recommendedName>
    <alternativeName>
        <fullName>Hypoxia-inducible factor 1-beta</fullName>
    </alternativeName>
    <alternativeName>
        <fullName>Protein tango</fullName>
    </alternativeName>
</protein>
<reference key="1">
    <citation type="journal article" date="1997" name="Development">
        <title>Transcriptional regulation of breathless FGF receptor gene by binding of TRACHEALESS/dARNT heterodimers to three central midline elements in Drosophila developing trachea.</title>
        <authorList>
            <person name="Ohshiro T."/>
            <person name="Saigo K."/>
        </authorList>
    </citation>
    <scope>NUCLEOTIDE SEQUENCE [MRNA]</scope>
    <scope>FUNCTION</scope>
    <scope>SUBUNIT</scope>
    <source>
        <tissue>Embryo</tissue>
    </source>
</reference>
<reference key="2">
    <citation type="journal article" date="1997" name="Genes Dev.">
        <title>The PAS domain confers target gene specificity of Drosophila bHLH/PAS proteins.</title>
        <authorList>
            <person name="Zelzer E."/>
            <person name="Wappner P."/>
            <person name="Shilo B.-Z."/>
        </authorList>
    </citation>
    <scope>NUCLEOTIDE SEQUENCE [MRNA]</scope>
    <scope>FUNCTION</scope>
    <scope>SUBUNIT</scope>
    <scope>TISSUE SPECIFICITY</scope>
    <source>
        <tissue>Embryo</tissue>
    </source>
</reference>
<reference key="3">
    <citation type="journal article" date="1997" name="Development">
        <title>The Drosophila tango gene encodes a bHLH-PAS protein that is orthologous to mammalian Arnt and controls CNS midline and tracheal development.</title>
        <authorList>
            <person name="Sonnenfeld M."/>
            <person name="Ward M."/>
            <person name="Nystroem G."/>
            <person name="Mosher J."/>
            <person name="Stahl S."/>
            <person name="Crews S."/>
        </authorList>
    </citation>
    <scope>NUCLEOTIDE SEQUENCE [MRNA]</scope>
    <scope>FUNCTION</scope>
    <scope>SUBUNIT</scope>
    <scope>TISSUE SPECIFICITY</scope>
    <scope>DEVELOPMENTAL STAGE</scope>
    <source>
        <tissue>Embryo</tissue>
    </source>
</reference>
<reference key="4">
    <citation type="journal article" date="1999" name="Brain Res. Mol. Brain Res.">
        <title>Isolation and characterization of the hypoxia-inducible factor 1beta in Drosophila melanogaster.</title>
        <authorList>
            <person name="Ma E."/>
            <person name="Haddad G.G."/>
        </authorList>
    </citation>
    <scope>NUCLEOTIDE SEQUENCE [MRNA]</scope>
    <scope>FUNCTION</scope>
    <scope>DEVELOPMENTAL STAGE</scope>
    <source>
        <strain>Canton-S</strain>
        <tissue>Embryo</tissue>
        <tissue>Head</tissue>
        <tissue>Pupae</tissue>
    </source>
</reference>
<reference key="5">
    <citation type="journal article" date="2000" name="Science">
        <title>The genome sequence of Drosophila melanogaster.</title>
        <authorList>
            <person name="Adams M.D."/>
            <person name="Celniker S.E."/>
            <person name="Holt R.A."/>
            <person name="Evans C.A."/>
            <person name="Gocayne J.D."/>
            <person name="Amanatides P.G."/>
            <person name="Scherer S.E."/>
            <person name="Li P.W."/>
            <person name="Hoskins R.A."/>
            <person name="Galle R.F."/>
            <person name="George R.A."/>
            <person name="Lewis S.E."/>
            <person name="Richards S."/>
            <person name="Ashburner M."/>
            <person name="Henderson S.N."/>
            <person name="Sutton G.G."/>
            <person name="Wortman J.R."/>
            <person name="Yandell M.D."/>
            <person name="Zhang Q."/>
            <person name="Chen L.X."/>
            <person name="Brandon R.C."/>
            <person name="Rogers Y.-H.C."/>
            <person name="Blazej R.G."/>
            <person name="Champe M."/>
            <person name="Pfeiffer B.D."/>
            <person name="Wan K.H."/>
            <person name="Doyle C."/>
            <person name="Baxter E.G."/>
            <person name="Helt G."/>
            <person name="Nelson C.R."/>
            <person name="Miklos G.L.G."/>
            <person name="Abril J.F."/>
            <person name="Agbayani A."/>
            <person name="An H.-J."/>
            <person name="Andrews-Pfannkoch C."/>
            <person name="Baldwin D."/>
            <person name="Ballew R.M."/>
            <person name="Basu A."/>
            <person name="Baxendale J."/>
            <person name="Bayraktaroglu L."/>
            <person name="Beasley E.M."/>
            <person name="Beeson K.Y."/>
            <person name="Benos P.V."/>
            <person name="Berman B.P."/>
            <person name="Bhandari D."/>
            <person name="Bolshakov S."/>
            <person name="Borkova D."/>
            <person name="Botchan M.R."/>
            <person name="Bouck J."/>
            <person name="Brokstein P."/>
            <person name="Brottier P."/>
            <person name="Burtis K.C."/>
            <person name="Busam D.A."/>
            <person name="Butler H."/>
            <person name="Cadieu E."/>
            <person name="Center A."/>
            <person name="Chandra I."/>
            <person name="Cherry J.M."/>
            <person name="Cawley S."/>
            <person name="Dahlke C."/>
            <person name="Davenport L.B."/>
            <person name="Davies P."/>
            <person name="de Pablos B."/>
            <person name="Delcher A."/>
            <person name="Deng Z."/>
            <person name="Mays A.D."/>
            <person name="Dew I."/>
            <person name="Dietz S.M."/>
            <person name="Dodson K."/>
            <person name="Doup L.E."/>
            <person name="Downes M."/>
            <person name="Dugan-Rocha S."/>
            <person name="Dunkov B.C."/>
            <person name="Dunn P."/>
            <person name="Durbin K.J."/>
            <person name="Evangelista C.C."/>
            <person name="Ferraz C."/>
            <person name="Ferriera S."/>
            <person name="Fleischmann W."/>
            <person name="Fosler C."/>
            <person name="Gabrielian A.E."/>
            <person name="Garg N.S."/>
            <person name="Gelbart W.M."/>
            <person name="Glasser K."/>
            <person name="Glodek A."/>
            <person name="Gong F."/>
            <person name="Gorrell J.H."/>
            <person name="Gu Z."/>
            <person name="Guan P."/>
            <person name="Harris M."/>
            <person name="Harris N.L."/>
            <person name="Harvey D.A."/>
            <person name="Heiman T.J."/>
            <person name="Hernandez J.R."/>
            <person name="Houck J."/>
            <person name="Hostin D."/>
            <person name="Houston K.A."/>
            <person name="Howland T.J."/>
            <person name="Wei M.-H."/>
            <person name="Ibegwam C."/>
            <person name="Jalali M."/>
            <person name="Kalush F."/>
            <person name="Karpen G.H."/>
            <person name="Ke Z."/>
            <person name="Kennison J.A."/>
            <person name="Ketchum K.A."/>
            <person name="Kimmel B.E."/>
            <person name="Kodira C.D."/>
            <person name="Kraft C.L."/>
            <person name="Kravitz S."/>
            <person name="Kulp D."/>
            <person name="Lai Z."/>
            <person name="Lasko P."/>
            <person name="Lei Y."/>
            <person name="Levitsky A.A."/>
            <person name="Li J.H."/>
            <person name="Li Z."/>
            <person name="Liang Y."/>
            <person name="Lin X."/>
            <person name="Liu X."/>
            <person name="Mattei B."/>
            <person name="McIntosh T.C."/>
            <person name="McLeod M.P."/>
            <person name="McPherson D."/>
            <person name="Merkulov G."/>
            <person name="Milshina N.V."/>
            <person name="Mobarry C."/>
            <person name="Morris J."/>
            <person name="Moshrefi A."/>
            <person name="Mount S.M."/>
            <person name="Moy M."/>
            <person name="Murphy B."/>
            <person name="Murphy L."/>
            <person name="Muzny D.M."/>
            <person name="Nelson D.L."/>
            <person name="Nelson D.R."/>
            <person name="Nelson K.A."/>
            <person name="Nixon K."/>
            <person name="Nusskern D.R."/>
            <person name="Pacleb J.M."/>
            <person name="Palazzolo M."/>
            <person name="Pittman G.S."/>
            <person name="Pan S."/>
            <person name="Pollard J."/>
            <person name="Puri V."/>
            <person name="Reese M.G."/>
            <person name="Reinert K."/>
            <person name="Remington K."/>
            <person name="Saunders R.D.C."/>
            <person name="Scheeler F."/>
            <person name="Shen H."/>
            <person name="Shue B.C."/>
            <person name="Siden-Kiamos I."/>
            <person name="Simpson M."/>
            <person name="Skupski M.P."/>
            <person name="Smith T.J."/>
            <person name="Spier E."/>
            <person name="Spradling A.C."/>
            <person name="Stapleton M."/>
            <person name="Strong R."/>
            <person name="Sun E."/>
            <person name="Svirskas R."/>
            <person name="Tector C."/>
            <person name="Turner R."/>
            <person name="Venter E."/>
            <person name="Wang A.H."/>
            <person name="Wang X."/>
            <person name="Wang Z.-Y."/>
            <person name="Wassarman D.A."/>
            <person name="Weinstock G.M."/>
            <person name="Weissenbach J."/>
            <person name="Williams S.M."/>
            <person name="Woodage T."/>
            <person name="Worley K.C."/>
            <person name="Wu D."/>
            <person name="Yang S."/>
            <person name="Yao Q.A."/>
            <person name="Ye J."/>
            <person name="Yeh R.-F."/>
            <person name="Zaveri J.S."/>
            <person name="Zhan M."/>
            <person name="Zhang G."/>
            <person name="Zhao Q."/>
            <person name="Zheng L."/>
            <person name="Zheng X.H."/>
            <person name="Zhong F.N."/>
            <person name="Zhong W."/>
            <person name="Zhou X."/>
            <person name="Zhu S.C."/>
            <person name="Zhu X."/>
            <person name="Smith H.O."/>
            <person name="Gibbs R.A."/>
            <person name="Myers E.W."/>
            <person name="Rubin G.M."/>
            <person name="Venter J.C."/>
        </authorList>
    </citation>
    <scope>NUCLEOTIDE SEQUENCE [LARGE SCALE GENOMIC DNA]</scope>
    <source>
        <strain>Berkeley</strain>
    </source>
</reference>
<reference key="6">
    <citation type="journal article" date="2002" name="Genome Biol.">
        <title>Annotation of the Drosophila melanogaster euchromatic genome: a systematic review.</title>
        <authorList>
            <person name="Misra S."/>
            <person name="Crosby M.A."/>
            <person name="Mungall C.J."/>
            <person name="Matthews B.B."/>
            <person name="Campbell K.S."/>
            <person name="Hradecky P."/>
            <person name="Huang Y."/>
            <person name="Kaminker J.S."/>
            <person name="Millburn G.H."/>
            <person name="Prochnik S.E."/>
            <person name="Smith C.D."/>
            <person name="Tupy J.L."/>
            <person name="Whitfield E.J."/>
            <person name="Bayraktaroglu L."/>
            <person name="Berman B.P."/>
            <person name="Bettencourt B.R."/>
            <person name="Celniker S.E."/>
            <person name="de Grey A.D.N.J."/>
            <person name="Drysdale R.A."/>
            <person name="Harris N.L."/>
            <person name="Richter J."/>
            <person name="Russo S."/>
            <person name="Schroeder A.J."/>
            <person name="Shu S.Q."/>
            <person name="Stapleton M."/>
            <person name="Yamada C."/>
            <person name="Ashburner M."/>
            <person name="Gelbart W.M."/>
            <person name="Rubin G.M."/>
            <person name="Lewis S.E."/>
        </authorList>
    </citation>
    <scope>GENOME REANNOTATION</scope>
    <source>
        <strain>Berkeley</strain>
    </source>
</reference>
<reference key="7">
    <citation type="journal article" date="2002" name="Genome Biol.">
        <title>A Drosophila full-length cDNA resource.</title>
        <authorList>
            <person name="Stapleton M."/>
            <person name="Carlson J.W."/>
            <person name="Brokstein P."/>
            <person name="Yu C."/>
            <person name="Champe M."/>
            <person name="George R.A."/>
            <person name="Guarin H."/>
            <person name="Kronmiller B."/>
            <person name="Pacleb J.M."/>
            <person name="Park S."/>
            <person name="Wan K.H."/>
            <person name="Rubin G.M."/>
            <person name="Celniker S.E."/>
        </authorList>
    </citation>
    <scope>NUCLEOTIDE SEQUENCE [LARGE SCALE MRNA]</scope>
    <source>
        <strain>Berkeley</strain>
        <tissue>Embryo</tissue>
    </source>
</reference>
<reference key="8">
    <citation type="journal article" date="1986" name="Cell">
        <title>Structure of the segmentation gene paired and the Drosophila PRD gene set as part of a gene network.</title>
        <authorList>
            <person name="Frigerio G."/>
            <person name="Burri M."/>
            <person name="Bopp D."/>
            <person name="Baumgartner S."/>
            <person name="Noll M."/>
        </authorList>
    </citation>
    <scope>NUCLEOTIDE SEQUENCE [GENOMIC DNA] OF 586-623</scope>
</reference>
<name>ARNT_DROME</name>
<sequence>MDEANIQDKERFASRENHCEIERRRRNKMTAYITELSDMVPTCSALARKPDKLTILRMAVAHMKALRGTGNTSSDGTYKPSFLTDQELKHLILEAADGFLFVVSCDSGRVIYVSDSVTPVLNYTQSDWYGTSLYEHIHPDDREKIREQLSTQESQNAGRILDLKSGTVKKEGHQSSMRLSMGARRGFICRMRVGNVNPESMVSGHLNRLKQRNSLGPSRDGTNYAVVHCTGYIKNWPPTDMFPNMHMERDVDDMSSHCCLVAIGRLQVTSTAANDMSGSNNQSEFITRHAMDGKFTFVDQRVLNILGYTPTELLGKICYDFFHPEDQSHMKESFDQVLKQKGQMFSLLYRARAKNSEYVWLRTQAYAFLNPYTDEVEYIVCTNSSGKTMHGAPLDAAAAHTPEQVQQQQQQEQHVYVQAAPGVDYARRELTPVGSATNDGMYQTHMLAMQAPTPQQQQQQQQRPGSAQTTPVGYTYDTTHSPYSAGGPSPLAKIPKSGTSPTPVAPNSWAALRPQQQQQQQQPVTEGYQYQQTSPARSPSGPTYTQLSAGNGNRQQAQPGAYQAGPPPPPNAPGMWDWQQAGGHPHPPHPTAHPHHPHAHPGGPAGAGQPQGQEFSDMLQMLDHTPTTFEDLNINMFSTPFE</sequence>
<feature type="chain" id="PRO_0000127117" description="Aryl hydrocarbon receptor nuclear translocator homolog">
    <location>
        <begin position="1"/>
        <end position="642"/>
    </location>
</feature>
<feature type="domain" description="bHLH" evidence="2">
    <location>
        <begin position="13"/>
        <end position="66"/>
    </location>
</feature>
<feature type="domain" description="PAS 1" evidence="1">
    <location>
        <begin position="85"/>
        <end position="156"/>
    </location>
</feature>
<feature type="domain" description="PAS 2" evidence="1">
    <location>
        <begin position="271"/>
        <end position="341"/>
    </location>
</feature>
<feature type="domain" description="PAC">
    <location>
        <begin position="346"/>
        <end position="389"/>
    </location>
</feature>
<feature type="region of interest" description="Disordered" evidence="3">
    <location>
        <begin position="450"/>
        <end position="612"/>
    </location>
</feature>
<feature type="compositionally biased region" description="Polar residues" evidence="3">
    <location>
        <begin position="463"/>
        <end position="482"/>
    </location>
</feature>
<feature type="compositionally biased region" description="Polar residues" evidence="3">
    <location>
        <begin position="528"/>
        <end position="554"/>
    </location>
</feature>
<feature type="compositionally biased region" description="Low complexity" evidence="3">
    <location>
        <begin position="555"/>
        <end position="564"/>
    </location>
</feature>
<feature type="sequence conflict" description="In Ref. 1; BAA22868." evidence="8" ref="1">
    <original>V</original>
    <variation>M</variation>
    <location>
        <position position="110"/>
    </location>
</feature>
<feature type="sequence conflict" description="In Ref. 2; AAB69695, 3; AAB88882 and 4; AAD38396." evidence="8" ref="2 3 4">
    <original>Q</original>
    <variation>QQQ</variation>
    <location>
        <position position="410"/>
    </location>
</feature>
<feature type="sequence conflict" description="In Ref. 1; BAA22868." evidence="8" ref="1">
    <original>G</original>
    <variation>R</variation>
    <location>
        <position position="465"/>
    </location>
</feature>
<feature type="sequence conflict" description="In Ref. 2; AAB69695." evidence="8" ref="2">
    <original>P</original>
    <variation>T</variation>
    <location>
        <position position="488"/>
    </location>
</feature>
<keyword id="KW-0010">Activator</keyword>
<keyword id="KW-0238">DNA-binding</keyword>
<keyword id="KW-0539">Nucleus</keyword>
<keyword id="KW-1185">Reference proteome</keyword>
<keyword id="KW-0677">Repeat</keyword>
<keyword id="KW-0804">Transcription</keyword>
<keyword id="KW-0805">Transcription regulation</keyword>
<proteinExistence type="evidence at protein level"/>
<accession>O15945</accession>
<accession>O16167</accession>
<accession>O44082</accession>
<accession>Q24461</accession>
<accession>Q9VHI2</accession>